<dbReference type="EMBL" id="AL513382">
    <property type="protein sequence ID" value="CAD08052.1"/>
    <property type="molecule type" value="Genomic_DNA"/>
</dbReference>
<dbReference type="EMBL" id="AE014613">
    <property type="protein sequence ID" value="AAO71415.1"/>
    <property type="molecule type" value="Genomic_DNA"/>
</dbReference>
<dbReference type="RefSeq" id="NP_458343.1">
    <property type="nucleotide sequence ID" value="NC_003198.1"/>
</dbReference>
<dbReference type="RefSeq" id="WP_001541054.1">
    <property type="nucleotide sequence ID" value="NZ_WSUR01000001.1"/>
</dbReference>
<dbReference type="SMR" id="P67101"/>
<dbReference type="STRING" id="220341.gene:17588065"/>
<dbReference type="GeneID" id="66757902"/>
<dbReference type="KEGG" id="stt:t3944"/>
<dbReference type="KEGG" id="sty:STY4233"/>
<dbReference type="PATRIC" id="fig|220341.7.peg.4323"/>
<dbReference type="eggNOG" id="COG0425">
    <property type="taxonomic scope" value="Bacteria"/>
</dbReference>
<dbReference type="HOGENOM" id="CLU_165255_5_0_6"/>
<dbReference type="OMA" id="FCQFLGH"/>
<dbReference type="OrthoDB" id="9797352at2"/>
<dbReference type="Proteomes" id="UP000000541">
    <property type="component" value="Chromosome"/>
</dbReference>
<dbReference type="Proteomes" id="UP000002670">
    <property type="component" value="Chromosome"/>
</dbReference>
<dbReference type="GO" id="GO:0005737">
    <property type="term" value="C:cytoplasm"/>
    <property type="evidence" value="ECO:0007669"/>
    <property type="project" value="UniProtKB-SubCell"/>
</dbReference>
<dbReference type="GO" id="GO:0097163">
    <property type="term" value="F:sulfur carrier activity"/>
    <property type="evidence" value="ECO:0007669"/>
    <property type="project" value="UniProtKB-UniRule"/>
</dbReference>
<dbReference type="GO" id="GO:0002143">
    <property type="term" value="P:tRNA wobble position uridine thiolation"/>
    <property type="evidence" value="ECO:0007669"/>
    <property type="project" value="InterPro"/>
</dbReference>
<dbReference type="CDD" id="cd03423">
    <property type="entry name" value="SirA"/>
    <property type="match status" value="1"/>
</dbReference>
<dbReference type="Gene3D" id="3.30.110.40">
    <property type="entry name" value="TusA-like domain"/>
    <property type="match status" value="1"/>
</dbReference>
<dbReference type="HAMAP" id="MF_00413">
    <property type="entry name" value="Thiourid_synth_A"/>
    <property type="match status" value="1"/>
</dbReference>
<dbReference type="InterPro" id="IPR022931">
    <property type="entry name" value="Sulphur_carrier_TusA"/>
</dbReference>
<dbReference type="InterPro" id="IPR001455">
    <property type="entry name" value="TusA-like"/>
</dbReference>
<dbReference type="InterPro" id="IPR036868">
    <property type="entry name" value="TusA-like_sf"/>
</dbReference>
<dbReference type="NCBIfam" id="NF001423">
    <property type="entry name" value="PRK00299.1"/>
    <property type="match status" value="1"/>
</dbReference>
<dbReference type="PANTHER" id="PTHR33279:SF2">
    <property type="entry name" value="SULFUR CARRIER PROTEIN TUSA"/>
    <property type="match status" value="1"/>
</dbReference>
<dbReference type="PANTHER" id="PTHR33279">
    <property type="entry name" value="SULFUR CARRIER PROTEIN YEDF-RELATED"/>
    <property type="match status" value="1"/>
</dbReference>
<dbReference type="Pfam" id="PF01206">
    <property type="entry name" value="TusA"/>
    <property type="match status" value="1"/>
</dbReference>
<dbReference type="SUPFAM" id="SSF64307">
    <property type="entry name" value="SirA-like"/>
    <property type="match status" value="1"/>
</dbReference>
<dbReference type="PROSITE" id="PS01148">
    <property type="entry name" value="UPF0033"/>
    <property type="match status" value="1"/>
</dbReference>
<feature type="chain" id="PRO_0000159051" description="Sulfur carrier protein TusA">
    <location>
        <begin position="1"/>
        <end position="81"/>
    </location>
</feature>
<feature type="active site" description="Cysteine persulfide intermediate" evidence="1">
    <location>
        <position position="19"/>
    </location>
</feature>
<protein>
    <recommendedName>
        <fullName evidence="1">Sulfur carrier protein TusA</fullName>
    </recommendedName>
    <alternativeName>
        <fullName evidence="1">Sulfur mediator TusA</fullName>
    </alternativeName>
    <alternativeName>
        <fullName evidence="1">Sulfur transfer protein TusA</fullName>
    </alternativeName>
    <alternativeName>
        <fullName evidence="1">tRNA 2-thiouridine synthesizing protein A</fullName>
    </alternativeName>
</protein>
<keyword id="KW-0963">Cytoplasm</keyword>
<keyword id="KW-0819">tRNA processing</keyword>
<gene>
    <name evidence="1" type="primary">tusA</name>
    <name type="ordered locus">STY4233</name>
    <name type="ordered locus">t3944</name>
</gene>
<reference key="1">
    <citation type="journal article" date="2001" name="Nature">
        <title>Complete genome sequence of a multiple drug resistant Salmonella enterica serovar Typhi CT18.</title>
        <authorList>
            <person name="Parkhill J."/>
            <person name="Dougan G."/>
            <person name="James K.D."/>
            <person name="Thomson N.R."/>
            <person name="Pickard D."/>
            <person name="Wain J."/>
            <person name="Churcher C.M."/>
            <person name="Mungall K.L."/>
            <person name="Bentley S.D."/>
            <person name="Holden M.T.G."/>
            <person name="Sebaihia M."/>
            <person name="Baker S."/>
            <person name="Basham D."/>
            <person name="Brooks K."/>
            <person name="Chillingworth T."/>
            <person name="Connerton P."/>
            <person name="Cronin A."/>
            <person name="Davis P."/>
            <person name="Davies R.M."/>
            <person name="Dowd L."/>
            <person name="White N."/>
            <person name="Farrar J."/>
            <person name="Feltwell T."/>
            <person name="Hamlin N."/>
            <person name="Haque A."/>
            <person name="Hien T.T."/>
            <person name="Holroyd S."/>
            <person name="Jagels K."/>
            <person name="Krogh A."/>
            <person name="Larsen T.S."/>
            <person name="Leather S."/>
            <person name="Moule S."/>
            <person name="O'Gaora P."/>
            <person name="Parry C."/>
            <person name="Quail M.A."/>
            <person name="Rutherford K.M."/>
            <person name="Simmonds M."/>
            <person name="Skelton J."/>
            <person name="Stevens K."/>
            <person name="Whitehead S."/>
            <person name="Barrell B.G."/>
        </authorList>
    </citation>
    <scope>NUCLEOTIDE SEQUENCE [LARGE SCALE GENOMIC DNA]</scope>
    <source>
        <strain>CT18</strain>
    </source>
</reference>
<reference key="2">
    <citation type="journal article" date="2003" name="J. Bacteriol.">
        <title>Comparative genomics of Salmonella enterica serovar Typhi strains Ty2 and CT18.</title>
        <authorList>
            <person name="Deng W."/>
            <person name="Liou S.-R."/>
            <person name="Plunkett G. III"/>
            <person name="Mayhew G.F."/>
            <person name="Rose D.J."/>
            <person name="Burland V."/>
            <person name="Kodoyianni V."/>
            <person name="Schwartz D.C."/>
            <person name="Blattner F.R."/>
        </authorList>
    </citation>
    <scope>NUCLEOTIDE SEQUENCE [LARGE SCALE GENOMIC DNA]</scope>
    <source>
        <strain>ATCC 700931 / Ty2</strain>
    </source>
</reference>
<name>TUSA_SALTI</name>
<accession>P67101</accession>
<accession>Q8XGC6</accession>
<sequence>MSDLFSSPDHTLDALGLRCPEPVMMVRKTVRNMQTGETLLIIADDPATTRDIPGFCTFMEHDLLAQETEGLPYRYLLRKAH</sequence>
<proteinExistence type="inferred from homology"/>
<evidence type="ECO:0000255" key="1">
    <source>
        <dbReference type="HAMAP-Rule" id="MF_00413"/>
    </source>
</evidence>
<comment type="function">
    <text evidence="1">Sulfur carrier protein involved in sulfur trafficking in the cell. Part of a sulfur-relay system required for 2-thiolation during synthesis of 2-thiouridine of the modified wobble base 5-methylaminomethyl-2-thiouridine (mnm(5)s(2)U) in tRNA. Interacts with IscS and stimulates its cysteine desulfurase activity. Accepts an activated sulfur from IscS, which is then transferred to TusD, and thus determines the direction of sulfur flow from IscS to 2-thiouridine formation. Also appears to be involved in sulfur transfer for the biosynthesis of molybdopterin.</text>
</comment>
<comment type="pathway">
    <text evidence="1">tRNA modification.</text>
</comment>
<comment type="subunit">
    <text evidence="1">Interacts with IscS.</text>
</comment>
<comment type="subcellular location">
    <subcellularLocation>
        <location evidence="1">Cytoplasm</location>
    </subcellularLocation>
</comment>
<comment type="similarity">
    <text evidence="1">Belongs to the sulfur carrier protein TusA family.</text>
</comment>
<organism>
    <name type="scientific">Salmonella typhi</name>
    <dbReference type="NCBI Taxonomy" id="90370"/>
    <lineage>
        <taxon>Bacteria</taxon>
        <taxon>Pseudomonadati</taxon>
        <taxon>Pseudomonadota</taxon>
        <taxon>Gammaproteobacteria</taxon>
        <taxon>Enterobacterales</taxon>
        <taxon>Enterobacteriaceae</taxon>
        <taxon>Salmonella</taxon>
    </lineage>
</organism>